<dbReference type="EC" id="2.7.1.60" evidence="1"/>
<dbReference type="EMBL" id="CU928158">
    <property type="protein sequence ID" value="CAQ90686.1"/>
    <property type="molecule type" value="Genomic_DNA"/>
</dbReference>
<dbReference type="RefSeq" id="WP_000209044.1">
    <property type="nucleotide sequence ID" value="NC_011740.1"/>
</dbReference>
<dbReference type="SMR" id="B7LRJ0"/>
<dbReference type="GeneID" id="75060189"/>
<dbReference type="KEGG" id="efe:EFER_3193"/>
<dbReference type="HOGENOM" id="CLU_036604_0_4_6"/>
<dbReference type="OrthoDB" id="8772678at2"/>
<dbReference type="UniPathway" id="UPA00629">
    <property type="reaction ID" value="UER00681"/>
</dbReference>
<dbReference type="Proteomes" id="UP000000745">
    <property type="component" value="Chromosome"/>
</dbReference>
<dbReference type="GO" id="GO:0005524">
    <property type="term" value="F:ATP binding"/>
    <property type="evidence" value="ECO:0007669"/>
    <property type="project" value="UniProtKB-UniRule"/>
</dbReference>
<dbReference type="GO" id="GO:0009384">
    <property type="term" value="F:N-acylmannosamine kinase activity"/>
    <property type="evidence" value="ECO:0007669"/>
    <property type="project" value="UniProtKB-UniRule"/>
</dbReference>
<dbReference type="GO" id="GO:0008270">
    <property type="term" value="F:zinc ion binding"/>
    <property type="evidence" value="ECO:0007669"/>
    <property type="project" value="UniProtKB-UniRule"/>
</dbReference>
<dbReference type="GO" id="GO:0019262">
    <property type="term" value="P:N-acetylneuraminate catabolic process"/>
    <property type="evidence" value="ECO:0007669"/>
    <property type="project" value="UniProtKB-UniRule"/>
</dbReference>
<dbReference type="CDD" id="cd24069">
    <property type="entry name" value="ASKHA_NBD_ROK_EcNanK-like"/>
    <property type="match status" value="1"/>
</dbReference>
<dbReference type="FunFam" id="3.30.420.40:FF:000062">
    <property type="entry name" value="N-acetylmannosamine kinase"/>
    <property type="match status" value="1"/>
</dbReference>
<dbReference type="FunFam" id="3.30.420.40:FF:000063">
    <property type="entry name" value="N-acetylmannosamine kinase"/>
    <property type="match status" value="1"/>
</dbReference>
<dbReference type="Gene3D" id="3.30.420.40">
    <property type="match status" value="2"/>
</dbReference>
<dbReference type="HAMAP" id="MF_01234">
    <property type="entry name" value="ManNAc_kinase"/>
    <property type="match status" value="1"/>
</dbReference>
<dbReference type="InterPro" id="IPR043129">
    <property type="entry name" value="ATPase_NBD"/>
</dbReference>
<dbReference type="InterPro" id="IPR023945">
    <property type="entry name" value="ManNAc_kinase_bac"/>
</dbReference>
<dbReference type="InterPro" id="IPR000600">
    <property type="entry name" value="ROK"/>
</dbReference>
<dbReference type="InterPro" id="IPR049874">
    <property type="entry name" value="ROK_cs"/>
</dbReference>
<dbReference type="NCBIfam" id="NF047821">
    <property type="entry name" value="NactlManKinNanK"/>
    <property type="match status" value="1"/>
</dbReference>
<dbReference type="NCBIfam" id="NF003461">
    <property type="entry name" value="PRK05082.1"/>
    <property type="match status" value="1"/>
</dbReference>
<dbReference type="PANTHER" id="PTHR18964:SF169">
    <property type="entry name" value="N-ACETYLMANNOSAMINE KINASE"/>
    <property type="match status" value="1"/>
</dbReference>
<dbReference type="PANTHER" id="PTHR18964">
    <property type="entry name" value="ROK (REPRESSOR, ORF, KINASE) FAMILY"/>
    <property type="match status" value="1"/>
</dbReference>
<dbReference type="Pfam" id="PF00480">
    <property type="entry name" value="ROK"/>
    <property type="match status" value="1"/>
</dbReference>
<dbReference type="SUPFAM" id="SSF53067">
    <property type="entry name" value="Actin-like ATPase domain"/>
    <property type="match status" value="1"/>
</dbReference>
<dbReference type="PROSITE" id="PS01125">
    <property type="entry name" value="ROK"/>
    <property type="match status" value="1"/>
</dbReference>
<reference key="1">
    <citation type="journal article" date="2009" name="PLoS Genet.">
        <title>Organised genome dynamics in the Escherichia coli species results in highly diverse adaptive paths.</title>
        <authorList>
            <person name="Touchon M."/>
            <person name="Hoede C."/>
            <person name="Tenaillon O."/>
            <person name="Barbe V."/>
            <person name="Baeriswyl S."/>
            <person name="Bidet P."/>
            <person name="Bingen E."/>
            <person name="Bonacorsi S."/>
            <person name="Bouchier C."/>
            <person name="Bouvet O."/>
            <person name="Calteau A."/>
            <person name="Chiapello H."/>
            <person name="Clermont O."/>
            <person name="Cruveiller S."/>
            <person name="Danchin A."/>
            <person name="Diard M."/>
            <person name="Dossat C."/>
            <person name="Karoui M.E."/>
            <person name="Frapy E."/>
            <person name="Garry L."/>
            <person name="Ghigo J.M."/>
            <person name="Gilles A.M."/>
            <person name="Johnson J."/>
            <person name="Le Bouguenec C."/>
            <person name="Lescat M."/>
            <person name="Mangenot S."/>
            <person name="Martinez-Jehanne V."/>
            <person name="Matic I."/>
            <person name="Nassif X."/>
            <person name="Oztas S."/>
            <person name="Petit M.A."/>
            <person name="Pichon C."/>
            <person name="Rouy Z."/>
            <person name="Ruf C.S."/>
            <person name="Schneider D."/>
            <person name="Tourret J."/>
            <person name="Vacherie B."/>
            <person name="Vallenet D."/>
            <person name="Medigue C."/>
            <person name="Rocha E.P.C."/>
            <person name="Denamur E."/>
        </authorList>
    </citation>
    <scope>NUCLEOTIDE SEQUENCE [LARGE SCALE GENOMIC DNA]</scope>
    <source>
        <strain>ATCC 35469 / DSM 13698 / BCRC 15582 / CCUG 18766 / IAM 14443 / JCM 21226 / LMG 7866 / NBRC 102419 / NCTC 12128 / CDC 0568-73</strain>
    </source>
</reference>
<evidence type="ECO:0000255" key="1">
    <source>
        <dbReference type="HAMAP-Rule" id="MF_01234"/>
    </source>
</evidence>
<feature type="chain" id="PRO_1000139687" description="N-acetylmannosamine kinase">
    <location>
        <begin position="1"/>
        <end position="291"/>
    </location>
</feature>
<feature type="binding site" evidence="1">
    <location>
        <begin position="5"/>
        <end position="12"/>
    </location>
    <ligand>
        <name>ATP</name>
        <dbReference type="ChEBI" id="CHEBI:30616"/>
    </ligand>
</feature>
<feature type="binding site" evidence="1">
    <location>
        <begin position="132"/>
        <end position="139"/>
    </location>
    <ligand>
        <name>ATP</name>
        <dbReference type="ChEBI" id="CHEBI:30616"/>
    </ligand>
</feature>
<feature type="binding site" evidence="1">
    <location>
        <position position="156"/>
    </location>
    <ligand>
        <name>Zn(2+)</name>
        <dbReference type="ChEBI" id="CHEBI:29105"/>
    </ligand>
</feature>
<feature type="binding site" evidence="1">
    <location>
        <position position="166"/>
    </location>
    <ligand>
        <name>Zn(2+)</name>
        <dbReference type="ChEBI" id="CHEBI:29105"/>
    </ligand>
</feature>
<feature type="binding site" evidence="1">
    <location>
        <position position="168"/>
    </location>
    <ligand>
        <name>Zn(2+)</name>
        <dbReference type="ChEBI" id="CHEBI:29105"/>
    </ligand>
</feature>
<feature type="binding site" evidence="1">
    <location>
        <position position="173"/>
    </location>
    <ligand>
        <name>Zn(2+)</name>
        <dbReference type="ChEBI" id="CHEBI:29105"/>
    </ligand>
</feature>
<name>NANK_ESCF3</name>
<organism>
    <name type="scientific">Escherichia fergusonii (strain ATCC 35469 / DSM 13698 / CCUG 18766 / IAM 14443 / JCM 21226 / LMG 7866 / NBRC 102419 / NCTC 12128 / CDC 0568-73)</name>
    <dbReference type="NCBI Taxonomy" id="585054"/>
    <lineage>
        <taxon>Bacteria</taxon>
        <taxon>Pseudomonadati</taxon>
        <taxon>Pseudomonadota</taxon>
        <taxon>Gammaproteobacteria</taxon>
        <taxon>Enterobacterales</taxon>
        <taxon>Enterobacteriaceae</taxon>
        <taxon>Escherichia</taxon>
    </lineage>
</organism>
<sequence length="291" mass="29608">MTTLAIDIGGTKLAAALIGADGQIRDRRELPTPASQTPEALREALAALVSPLQAHAQQVAIASTGIIRDGSLLALNPHNLGGLLHFPLVKTLEQLTDLPTIAINDAQAAAWAEYQGLEGDITDMVFITVSTGVGGGVVSGGKLLTGPGGLAGHIGHTLADPHGPVCGCGRTGCVEAIASGRGIAAAAQGELAGADAKAIFKRVGQGDEQAQQLIHRSARVLARLIADIKATTDCQCVVVGGSVGLAEGYLALVETYLAQEPAAFHVDLLAAHYRHDAGLLGAALLAQGEKL</sequence>
<comment type="function">
    <text evidence="1">Catalyzes the phosphorylation of N-acetylmannosamine (ManNAc) to ManNAc-6-P.</text>
</comment>
<comment type="catalytic activity">
    <reaction evidence="1">
        <text>an N-acyl-D-mannosamine + ATP = an N-acyl-D-mannosamine 6-phosphate + ADP + H(+)</text>
        <dbReference type="Rhea" id="RHEA:23832"/>
        <dbReference type="ChEBI" id="CHEBI:15378"/>
        <dbReference type="ChEBI" id="CHEBI:16062"/>
        <dbReference type="ChEBI" id="CHEBI:30616"/>
        <dbReference type="ChEBI" id="CHEBI:57666"/>
        <dbReference type="ChEBI" id="CHEBI:456216"/>
        <dbReference type="EC" id="2.7.1.60"/>
    </reaction>
</comment>
<comment type="pathway">
    <text evidence="1">Amino-sugar metabolism; N-acetylneuraminate degradation; D-fructose 6-phosphate from N-acetylneuraminate: step 2/5.</text>
</comment>
<comment type="subunit">
    <text evidence="1">Homodimer.</text>
</comment>
<comment type="similarity">
    <text evidence="1">Belongs to the ROK (NagC/XylR) family. NanK subfamily.</text>
</comment>
<accession>B7LRJ0</accession>
<protein>
    <recommendedName>
        <fullName evidence="1">N-acetylmannosamine kinase</fullName>
        <ecNumber evidence="1">2.7.1.60</ecNumber>
    </recommendedName>
    <alternativeName>
        <fullName evidence="1">ManNAc kinase</fullName>
    </alternativeName>
    <alternativeName>
        <fullName evidence="1">N-acetyl-D-mannosamine kinase</fullName>
    </alternativeName>
</protein>
<keyword id="KW-0067">ATP-binding</keyword>
<keyword id="KW-0119">Carbohydrate metabolism</keyword>
<keyword id="KW-0418">Kinase</keyword>
<keyword id="KW-0479">Metal-binding</keyword>
<keyword id="KW-0547">Nucleotide-binding</keyword>
<keyword id="KW-0808">Transferase</keyword>
<keyword id="KW-0862">Zinc</keyword>
<proteinExistence type="inferred from homology"/>
<gene>
    <name evidence="1" type="primary">nanK</name>
    <name type="ordered locus">EFER_3193</name>
</gene>